<comment type="function">
    <text evidence="1">An essential GTPase which binds GTP, GDP and possibly (p)ppGpp with moderate affinity, with high nucleotide exchange rates and a fairly low GTP hydrolysis rate. Plays a role in control of the cell cycle, stress response, ribosome biogenesis and in those bacteria that undergo differentiation, in morphogenesis control.</text>
</comment>
<comment type="cofactor">
    <cofactor evidence="1">
        <name>Mg(2+)</name>
        <dbReference type="ChEBI" id="CHEBI:18420"/>
    </cofactor>
</comment>
<comment type="subunit">
    <text evidence="1">Monomer.</text>
</comment>
<comment type="subcellular location">
    <subcellularLocation>
        <location evidence="1">Cytoplasm</location>
    </subcellularLocation>
</comment>
<comment type="similarity">
    <text evidence="1">Belongs to the TRAFAC class OBG-HflX-like GTPase superfamily. OBG GTPase family.</text>
</comment>
<comment type="sequence caution" evidence="3">
    <conflict type="erroneous initiation">
        <sequence resource="EMBL-CDS" id="CAC47738"/>
    </conflict>
    <text>Extended N-terminus.</text>
</comment>
<gene>
    <name evidence="1" type="primary">obg</name>
    <name type="ordered locus">R03159</name>
    <name type="ORF">SMc03775</name>
</gene>
<reference key="1">
    <citation type="journal article" date="2001" name="Proc. Natl. Acad. Sci. U.S.A.">
        <title>Analysis of the chromosome sequence of the legume symbiont Sinorhizobium meliloti strain 1021.</title>
        <authorList>
            <person name="Capela D."/>
            <person name="Barloy-Hubler F."/>
            <person name="Gouzy J."/>
            <person name="Bothe G."/>
            <person name="Ampe F."/>
            <person name="Batut J."/>
            <person name="Boistard P."/>
            <person name="Becker A."/>
            <person name="Boutry M."/>
            <person name="Cadieu E."/>
            <person name="Dreano S."/>
            <person name="Gloux S."/>
            <person name="Godrie T."/>
            <person name="Goffeau A."/>
            <person name="Kahn D."/>
            <person name="Kiss E."/>
            <person name="Lelaure V."/>
            <person name="Masuy D."/>
            <person name="Pohl T."/>
            <person name="Portetelle D."/>
            <person name="Puehler A."/>
            <person name="Purnelle B."/>
            <person name="Ramsperger U."/>
            <person name="Renard C."/>
            <person name="Thebault P."/>
            <person name="Vandenbol M."/>
            <person name="Weidner S."/>
            <person name="Galibert F."/>
        </authorList>
    </citation>
    <scope>NUCLEOTIDE SEQUENCE [LARGE SCALE GENOMIC DNA]</scope>
    <source>
        <strain>1021</strain>
    </source>
</reference>
<reference key="2">
    <citation type="journal article" date="2001" name="Science">
        <title>The composite genome of the legume symbiont Sinorhizobium meliloti.</title>
        <authorList>
            <person name="Galibert F."/>
            <person name="Finan T.M."/>
            <person name="Long S.R."/>
            <person name="Puehler A."/>
            <person name="Abola P."/>
            <person name="Ampe F."/>
            <person name="Barloy-Hubler F."/>
            <person name="Barnett M.J."/>
            <person name="Becker A."/>
            <person name="Boistard P."/>
            <person name="Bothe G."/>
            <person name="Boutry M."/>
            <person name="Bowser L."/>
            <person name="Buhrmester J."/>
            <person name="Cadieu E."/>
            <person name="Capela D."/>
            <person name="Chain P."/>
            <person name="Cowie A."/>
            <person name="Davis R.W."/>
            <person name="Dreano S."/>
            <person name="Federspiel N.A."/>
            <person name="Fisher R.F."/>
            <person name="Gloux S."/>
            <person name="Godrie T."/>
            <person name="Goffeau A."/>
            <person name="Golding B."/>
            <person name="Gouzy J."/>
            <person name="Gurjal M."/>
            <person name="Hernandez-Lucas I."/>
            <person name="Hong A."/>
            <person name="Huizar L."/>
            <person name="Hyman R.W."/>
            <person name="Jones T."/>
            <person name="Kahn D."/>
            <person name="Kahn M.L."/>
            <person name="Kalman S."/>
            <person name="Keating D.H."/>
            <person name="Kiss E."/>
            <person name="Komp C."/>
            <person name="Lelaure V."/>
            <person name="Masuy D."/>
            <person name="Palm C."/>
            <person name="Peck M.C."/>
            <person name="Pohl T.M."/>
            <person name="Portetelle D."/>
            <person name="Purnelle B."/>
            <person name="Ramsperger U."/>
            <person name="Surzycki R."/>
            <person name="Thebault P."/>
            <person name="Vandenbol M."/>
            <person name="Vorhoelter F.J."/>
            <person name="Weidner S."/>
            <person name="Wells D.H."/>
            <person name="Wong K."/>
            <person name="Yeh K.-C."/>
            <person name="Batut J."/>
        </authorList>
    </citation>
    <scope>NUCLEOTIDE SEQUENCE [LARGE SCALE GENOMIC DNA]</scope>
    <source>
        <strain>1021</strain>
    </source>
</reference>
<sequence>MKFLDETKVYIRSGDGGAGAVSFRREKFIEFGGPDGGDGGRGGDVWVEAVNGLNTLIDFRYQQHFKAKTGTHGMGRNRTGAKGGDVTLKVPVGTQIFEEDNETLIVDMVAEGQRYRLAAGGNGGFGNAHFKSSTNQAPSWANPGLEGEEKTIWLRLKLIADAGLVGLPNAGKSTFLAACTRARPKIANYPFTTLHPNLGVATIDEKEFIIADIPGLIEGAHEGVGIGDRFLGHVERTRVLLHLVSAQEEDVAKAYKTVKHELEAYGGGLEEKPQIVALSQIDVLDEEELKAKAKALGKACGTPPLLISAVTNKGMTEALRALRSVIAAAKAGEEEA</sequence>
<proteinExistence type="inferred from homology"/>
<evidence type="ECO:0000255" key="1">
    <source>
        <dbReference type="HAMAP-Rule" id="MF_01454"/>
    </source>
</evidence>
<evidence type="ECO:0000255" key="2">
    <source>
        <dbReference type="PROSITE-ProRule" id="PRU01231"/>
    </source>
</evidence>
<evidence type="ECO:0000305" key="3"/>
<feature type="chain" id="PRO_0000386180" description="GTPase Obg">
    <location>
        <begin position="1"/>
        <end position="336"/>
    </location>
</feature>
<feature type="domain" description="Obg" evidence="2">
    <location>
        <begin position="1"/>
        <end position="159"/>
    </location>
</feature>
<feature type="domain" description="OBG-type G" evidence="1">
    <location>
        <begin position="160"/>
        <end position="327"/>
    </location>
</feature>
<feature type="binding site" evidence="1">
    <location>
        <begin position="166"/>
        <end position="173"/>
    </location>
    <ligand>
        <name>GTP</name>
        <dbReference type="ChEBI" id="CHEBI:37565"/>
    </ligand>
</feature>
<feature type="binding site" evidence="1">
    <location>
        <position position="173"/>
    </location>
    <ligand>
        <name>Mg(2+)</name>
        <dbReference type="ChEBI" id="CHEBI:18420"/>
    </ligand>
</feature>
<feature type="binding site" evidence="1">
    <location>
        <begin position="191"/>
        <end position="195"/>
    </location>
    <ligand>
        <name>GTP</name>
        <dbReference type="ChEBI" id="CHEBI:37565"/>
    </ligand>
</feature>
<feature type="binding site" evidence="1">
    <location>
        <position position="193"/>
    </location>
    <ligand>
        <name>Mg(2+)</name>
        <dbReference type="ChEBI" id="CHEBI:18420"/>
    </ligand>
</feature>
<feature type="binding site" evidence="1">
    <location>
        <begin position="212"/>
        <end position="215"/>
    </location>
    <ligand>
        <name>GTP</name>
        <dbReference type="ChEBI" id="CHEBI:37565"/>
    </ligand>
</feature>
<feature type="binding site" evidence="1">
    <location>
        <begin position="279"/>
        <end position="282"/>
    </location>
    <ligand>
        <name>GTP</name>
        <dbReference type="ChEBI" id="CHEBI:37565"/>
    </ligand>
</feature>
<feature type="binding site" evidence="1">
    <location>
        <begin position="308"/>
        <end position="310"/>
    </location>
    <ligand>
        <name>GTP</name>
        <dbReference type="ChEBI" id="CHEBI:37565"/>
    </ligand>
</feature>
<dbReference type="EC" id="3.6.5.-" evidence="1"/>
<dbReference type="EMBL" id="AL591688">
    <property type="protein sequence ID" value="CAC47738.1"/>
    <property type="status" value="ALT_INIT"/>
    <property type="molecule type" value="Genomic_DNA"/>
</dbReference>
<dbReference type="RefSeq" id="NP_387265.3">
    <property type="nucleotide sequence ID" value="NC_003047.1"/>
</dbReference>
<dbReference type="SMR" id="Q92LB4"/>
<dbReference type="EnsemblBacteria" id="CAC47738">
    <property type="protein sequence ID" value="CAC47738"/>
    <property type="gene ID" value="SMc03775"/>
</dbReference>
<dbReference type="KEGG" id="sme:SMc03775"/>
<dbReference type="PATRIC" id="fig|266834.11.peg.4707"/>
<dbReference type="eggNOG" id="COG0536">
    <property type="taxonomic scope" value="Bacteria"/>
</dbReference>
<dbReference type="HOGENOM" id="CLU_011747_2_0_5"/>
<dbReference type="OrthoDB" id="9807318at2"/>
<dbReference type="Proteomes" id="UP000001976">
    <property type="component" value="Chromosome"/>
</dbReference>
<dbReference type="GO" id="GO:0005737">
    <property type="term" value="C:cytoplasm"/>
    <property type="evidence" value="ECO:0007669"/>
    <property type="project" value="UniProtKB-SubCell"/>
</dbReference>
<dbReference type="GO" id="GO:0005525">
    <property type="term" value="F:GTP binding"/>
    <property type="evidence" value="ECO:0007669"/>
    <property type="project" value="UniProtKB-UniRule"/>
</dbReference>
<dbReference type="GO" id="GO:0003924">
    <property type="term" value="F:GTPase activity"/>
    <property type="evidence" value="ECO:0007669"/>
    <property type="project" value="UniProtKB-UniRule"/>
</dbReference>
<dbReference type="GO" id="GO:0000287">
    <property type="term" value="F:magnesium ion binding"/>
    <property type="evidence" value="ECO:0007669"/>
    <property type="project" value="InterPro"/>
</dbReference>
<dbReference type="GO" id="GO:0042254">
    <property type="term" value="P:ribosome biogenesis"/>
    <property type="evidence" value="ECO:0007669"/>
    <property type="project" value="UniProtKB-UniRule"/>
</dbReference>
<dbReference type="CDD" id="cd01898">
    <property type="entry name" value="Obg"/>
    <property type="match status" value="1"/>
</dbReference>
<dbReference type="FunFam" id="2.70.210.12:FF:000001">
    <property type="entry name" value="GTPase Obg"/>
    <property type="match status" value="1"/>
</dbReference>
<dbReference type="Gene3D" id="2.70.210.12">
    <property type="entry name" value="GTP1/OBG domain"/>
    <property type="match status" value="1"/>
</dbReference>
<dbReference type="Gene3D" id="3.40.50.300">
    <property type="entry name" value="P-loop containing nucleotide triphosphate hydrolases"/>
    <property type="match status" value="1"/>
</dbReference>
<dbReference type="HAMAP" id="MF_01454">
    <property type="entry name" value="GTPase_Obg"/>
    <property type="match status" value="1"/>
</dbReference>
<dbReference type="InterPro" id="IPR031167">
    <property type="entry name" value="G_OBG"/>
</dbReference>
<dbReference type="InterPro" id="IPR006073">
    <property type="entry name" value="GTP-bd"/>
</dbReference>
<dbReference type="InterPro" id="IPR014100">
    <property type="entry name" value="GTP-bd_Obg/CgtA"/>
</dbReference>
<dbReference type="InterPro" id="IPR006074">
    <property type="entry name" value="GTP1-OBG_CS"/>
</dbReference>
<dbReference type="InterPro" id="IPR006169">
    <property type="entry name" value="GTP1_OBG_dom"/>
</dbReference>
<dbReference type="InterPro" id="IPR036726">
    <property type="entry name" value="GTP1_OBG_dom_sf"/>
</dbReference>
<dbReference type="InterPro" id="IPR045086">
    <property type="entry name" value="OBG_GTPase"/>
</dbReference>
<dbReference type="InterPro" id="IPR027417">
    <property type="entry name" value="P-loop_NTPase"/>
</dbReference>
<dbReference type="NCBIfam" id="TIGR02729">
    <property type="entry name" value="Obg_CgtA"/>
    <property type="match status" value="1"/>
</dbReference>
<dbReference type="NCBIfam" id="NF008955">
    <property type="entry name" value="PRK12297.1"/>
    <property type="match status" value="1"/>
</dbReference>
<dbReference type="NCBIfam" id="NF008956">
    <property type="entry name" value="PRK12299.1"/>
    <property type="match status" value="1"/>
</dbReference>
<dbReference type="PANTHER" id="PTHR11702">
    <property type="entry name" value="DEVELOPMENTALLY REGULATED GTP-BINDING PROTEIN-RELATED"/>
    <property type="match status" value="1"/>
</dbReference>
<dbReference type="PANTHER" id="PTHR11702:SF31">
    <property type="entry name" value="MITOCHONDRIAL RIBOSOME-ASSOCIATED GTPASE 2"/>
    <property type="match status" value="1"/>
</dbReference>
<dbReference type="Pfam" id="PF01018">
    <property type="entry name" value="GTP1_OBG"/>
    <property type="match status" value="1"/>
</dbReference>
<dbReference type="Pfam" id="PF01926">
    <property type="entry name" value="MMR_HSR1"/>
    <property type="match status" value="1"/>
</dbReference>
<dbReference type="PIRSF" id="PIRSF002401">
    <property type="entry name" value="GTP_bd_Obg/CgtA"/>
    <property type="match status" value="1"/>
</dbReference>
<dbReference type="PRINTS" id="PR00326">
    <property type="entry name" value="GTP1OBG"/>
</dbReference>
<dbReference type="SUPFAM" id="SSF82051">
    <property type="entry name" value="Obg GTP-binding protein N-terminal domain"/>
    <property type="match status" value="1"/>
</dbReference>
<dbReference type="SUPFAM" id="SSF52540">
    <property type="entry name" value="P-loop containing nucleoside triphosphate hydrolases"/>
    <property type="match status" value="1"/>
</dbReference>
<dbReference type="PROSITE" id="PS51710">
    <property type="entry name" value="G_OBG"/>
    <property type="match status" value="1"/>
</dbReference>
<dbReference type="PROSITE" id="PS00905">
    <property type="entry name" value="GTP1_OBG"/>
    <property type="match status" value="1"/>
</dbReference>
<dbReference type="PROSITE" id="PS51883">
    <property type="entry name" value="OBG"/>
    <property type="match status" value="1"/>
</dbReference>
<name>OBG_RHIME</name>
<accession>Q92LB4</accession>
<organism>
    <name type="scientific">Rhizobium meliloti (strain 1021)</name>
    <name type="common">Ensifer meliloti</name>
    <name type="synonym">Sinorhizobium meliloti</name>
    <dbReference type="NCBI Taxonomy" id="266834"/>
    <lineage>
        <taxon>Bacteria</taxon>
        <taxon>Pseudomonadati</taxon>
        <taxon>Pseudomonadota</taxon>
        <taxon>Alphaproteobacteria</taxon>
        <taxon>Hyphomicrobiales</taxon>
        <taxon>Rhizobiaceae</taxon>
        <taxon>Sinorhizobium/Ensifer group</taxon>
        <taxon>Sinorhizobium</taxon>
    </lineage>
</organism>
<keyword id="KW-0963">Cytoplasm</keyword>
<keyword id="KW-0342">GTP-binding</keyword>
<keyword id="KW-0378">Hydrolase</keyword>
<keyword id="KW-0460">Magnesium</keyword>
<keyword id="KW-0479">Metal-binding</keyword>
<keyword id="KW-0547">Nucleotide-binding</keyword>
<keyword id="KW-1185">Reference proteome</keyword>
<protein>
    <recommendedName>
        <fullName evidence="1">GTPase Obg</fullName>
        <ecNumber evidence="1">3.6.5.-</ecNumber>
    </recommendedName>
    <alternativeName>
        <fullName evidence="1">GTP-binding protein Obg</fullName>
    </alternativeName>
</protein>